<comment type="function">
    <text evidence="1">Catalyzes the rearrangement of 1-deoxy-D-xylulose 5-phosphate (DXP) to produce the thiazole phosphate moiety of thiamine. Sulfur is provided by the thiocarboxylate moiety of the carrier protein ThiS. In vitro, sulfur can be provided by H(2)S.</text>
</comment>
<comment type="catalytic activity">
    <reaction evidence="1">
        <text>[ThiS sulfur-carrier protein]-C-terminal-Gly-aminoethanethioate + 2-iminoacetate + 1-deoxy-D-xylulose 5-phosphate = [ThiS sulfur-carrier protein]-C-terminal Gly-Gly + 2-[(2R,5Z)-2-carboxy-4-methylthiazol-5(2H)-ylidene]ethyl phosphate + 2 H2O + H(+)</text>
        <dbReference type="Rhea" id="RHEA:26297"/>
        <dbReference type="Rhea" id="RHEA-COMP:12909"/>
        <dbReference type="Rhea" id="RHEA-COMP:19908"/>
        <dbReference type="ChEBI" id="CHEBI:15377"/>
        <dbReference type="ChEBI" id="CHEBI:15378"/>
        <dbReference type="ChEBI" id="CHEBI:57792"/>
        <dbReference type="ChEBI" id="CHEBI:62899"/>
        <dbReference type="ChEBI" id="CHEBI:77846"/>
        <dbReference type="ChEBI" id="CHEBI:90778"/>
        <dbReference type="ChEBI" id="CHEBI:232372"/>
        <dbReference type="EC" id="2.8.1.10"/>
    </reaction>
</comment>
<comment type="pathway">
    <text evidence="1">Cofactor biosynthesis; thiamine diphosphate biosynthesis.</text>
</comment>
<comment type="subunit">
    <text evidence="1">Homotetramer. Forms heterodimers with either ThiH or ThiS.</text>
</comment>
<comment type="subcellular location">
    <subcellularLocation>
        <location evidence="1">Cytoplasm</location>
    </subcellularLocation>
</comment>
<comment type="similarity">
    <text evidence="1">Belongs to the ThiG family.</text>
</comment>
<keyword id="KW-0963">Cytoplasm</keyword>
<keyword id="KW-0704">Schiff base</keyword>
<keyword id="KW-0784">Thiamine biosynthesis</keyword>
<keyword id="KW-0808">Transferase</keyword>
<dbReference type="EC" id="2.8.1.10" evidence="1"/>
<dbReference type="EMBL" id="CP001020">
    <property type="protein sequence ID" value="ACJ19808.1"/>
    <property type="molecule type" value="Genomic_DNA"/>
</dbReference>
<dbReference type="RefSeq" id="WP_005769203.1">
    <property type="nucleotide sequence ID" value="NC_011528.1"/>
</dbReference>
<dbReference type="SMR" id="B6J5W6"/>
<dbReference type="KEGG" id="cbc:CbuK_0529"/>
<dbReference type="HOGENOM" id="CLU_062233_1_0_6"/>
<dbReference type="UniPathway" id="UPA00060"/>
<dbReference type="GO" id="GO:0005737">
    <property type="term" value="C:cytoplasm"/>
    <property type="evidence" value="ECO:0007669"/>
    <property type="project" value="UniProtKB-SubCell"/>
</dbReference>
<dbReference type="GO" id="GO:1990107">
    <property type="term" value="F:thiazole synthase activity"/>
    <property type="evidence" value="ECO:0007669"/>
    <property type="project" value="UniProtKB-EC"/>
</dbReference>
<dbReference type="GO" id="GO:0009229">
    <property type="term" value="P:thiamine diphosphate biosynthetic process"/>
    <property type="evidence" value="ECO:0007669"/>
    <property type="project" value="UniProtKB-UniRule"/>
</dbReference>
<dbReference type="CDD" id="cd04728">
    <property type="entry name" value="ThiG"/>
    <property type="match status" value="1"/>
</dbReference>
<dbReference type="Gene3D" id="3.20.20.70">
    <property type="entry name" value="Aldolase class I"/>
    <property type="match status" value="1"/>
</dbReference>
<dbReference type="HAMAP" id="MF_00443">
    <property type="entry name" value="ThiG"/>
    <property type="match status" value="1"/>
</dbReference>
<dbReference type="InterPro" id="IPR013785">
    <property type="entry name" value="Aldolase_TIM"/>
</dbReference>
<dbReference type="InterPro" id="IPR033983">
    <property type="entry name" value="Thiazole_synthase_ThiG"/>
</dbReference>
<dbReference type="InterPro" id="IPR008867">
    <property type="entry name" value="ThiG"/>
</dbReference>
<dbReference type="PANTHER" id="PTHR34266">
    <property type="entry name" value="THIAZOLE SYNTHASE"/>
    <property type="match status" value="1"/>
</dbReference>
<dbReference type="PANTHER" id="PTHR34266:SF2">
    <property type="entry name" value="THIAZOLE SYNTHASE"/>
    <property type="match status" value="1"/>
</dbReference>
<dbReference type="Pfam" id="PF05690">
    <property type="entry name" value="ThiG"/>
    <property type="match status" value="1"/>
</dbReference>
<dbReference type="SUPFAM" id="SSF110399">
    <property type="entry name" value="ThiG-like"/>
    <property type="match status" value="1"/>
</dbReference>
<gene>
    <name evidence="1" type="primary">thiG</name>
    <name type="ordered locus">CbuK_0529</name>
</gene>
<sequence>MWAIGGVQLNSRLLLGTAQYPSPQLMSDAVKAAGVEIITVSLRRQLSPQKENYFWDLLRSLPCHLLPNTAGCSSVKEAVNTARAARELFNTHWIKLEIIGDEYTLQPNPFELVNAATILVKEGFEVFPYCTEDLILCQRLVDAGCRVLMPWAAPIGSGRGLMNTYALQLLRERFPKNILIIDAGLGRPSHAAQVMEMGFDAVLLNSAVALAMDPVVMAAGFAKAVEGGRLGYEGGMIKARNVAKATTPLIGKPFLIEKP</sequence>
<reference key="1">
    <citation type="journal article" date="2009" name="Infect. Immun.">
        <title>Comparative genomics reveal extensive transposon-mediated genomic plasticity and diversity among potential effector proteins within the genus Coxiella.</title>
        <authorList>
            <person name="Beare P.A."/>
            <person name="Unsworth N."/>
            <person name="Andoh M."/>
            <person name="Voth D.E."/>
            <person name="Omsland A."/>
            <person name="Gilk S.D."/>
            <person name="Williams K.P."/>
            <person name="Sobral B.W."/>
            <person name="Kupko J.J. III"/>
            <person name="Porcella S.F."/>
            <person name="Samuel J.E."/>
            <person name="Heinzen R.A."/>
        </authorList>
    </citation>
    <scope>NUCLEOTIDE SEQUENCE [LARGE SCALE GENOMIC DNA]</scope>
    <source>
        <strain>CbuK_Q154</strain>
    </source>
</reference>
<feature type="chain" id="PRO_1000196849" description="Thiazole synthase">
    <location>
        <begin position="1"/>
        <end position="259"/>
    </location>
</feature>
<feature type="active site" description="Schiff-base intermediate with DXP" evidence="1">
    <location>
        <position position="95"/>
    </location>
</feature>
<feature type="binding site" evidence="1">
    <location>
        <position position="156"/>
    </location>
    <ligand>
        <name>1-deoxy-D-xylulose 5-phosphate</name>
        <dbReference type="ChEBI" id="CHEBI:57792"/>
    </ligand>
</feature>
<feature type="binding site" evidence="1">
    <location>
        <begin position="183"/>
        <end position="184"/>
    </location>
    <ligand>
        <name>1-deoxy-D-xylulose 5-phosphate</name>
        <dbReference type="ChEBI" id="CHEBI:57792"/>
    </ligand>
</feature>
<feature type="binding site" evidence="1">
    <location>
        <begin position="205"/>
        <end position="206"/>
    </location>
    <ligand>
        <name>1-deoxy-D-xylulose 5-phosphate</name>
        <dbReference type="ChEBI" id="CHEBI:57792"/>
    </ligand>
</feature>
<proteinExistence type="inferred from homology"/>
<accession>B6J5W6</accession>
<protein>
    <recommendedName>
        <fullName evidence="1">Thiazole synthase</fullName>
        <ecNumber evidence="1">2.8.1.10</ecNumber>
    </recommendedName>
</protein>
<organism>
    <name type="scientific">Coxiella burnetii (strain CbuK_Q154)</name>
    <name type="common">Coxiella burnetii (strain Q154)</name>
    <dbReference type="NCBI Taxonomy" id="434924"/>
    <lineage>
        <taxon>Bacteria</taxon>
        <taxon>Pseudomonadati</taxon>
        <taxon>Pseudomonadota</taxon>
        <taxon>Gammaproteobacteria</taxon>
        <taxon>Legionellales</taxon>
        <taxon>Coxiellaceae</taxon>
        <taxon>Coxiella</taxon>
    </lineage>
</organism>
<name>THIG_COXB1</name>
<evidence type="ECO:0000255" key="1">
    <source>
        <dbReference type="HAMAP-Rule" id="MF_00443"/>
    </source>
</evidence>